<proteinExistence type="inferred from homology"/>
<protein>
    <recommendedName>
        <fullName evidence="1">Arginine--tRNA ligase</fullName>
        <ecNumber evidence="1">6.1.1.19</ecNumber>
    </recommendedName>
    <alternativeName>
        <fullName evidence="1">Arginyl-tRNA synthetase</fullName>
        <shortName evidence="1">ArgRS</shortName>
    </alternativeName>
</protein>
<feature type="chain" id="PRO_0000241977" description="Arginine--tRNA ligase">
    <location>
        <begin position="1"/>
        <end position="580"/>
    </location>
</feature>
<feature type="short sequence motif" description="'HIGH' region">
    <location>
        <begin position="137"/>
        <end position="147"/>
    </location>
</feature>
<dbReference type="EC" id="6.1.1.19" evidence="1"/>
<dbReference type="EMBL" id="CP000235">
    <property type="protein sequence ID" value="ABD43701.1"/>
    <property type="molecule type" value="Genomic_DNA"/>
</dbReference>
<dbReference type="RefSeq" id="WP_011450802.1">
    <property type="nucleotide sequence ID" value="NC_007797.1"/>
</dbReference>
<dbReference type="SMR" id="Q2GK20"/>
<dbReference type="STRING" id="212042.APH_0700"/>
<dbReference type="PaxDb" id="212042-APH_0700"/>
<dbReference type="EnsemblBacteria" id="ABD43701">
    <property type="protein sequence ID" value="ABD43701"/>
    <property type="gene ID" value="APH_0700"/>
</dbReference>
<dbReference type="GeneID" id="92748237"/>
<dbReference type="KEGG" id="aph:APH_0700"/>
<dbReference type="eggNOG" id="COG0018">
    <property type="taxonomic scope" value="Bacteria"/>
</dbReference>
<dbReference type="HOGENOM" id="CLU_006406_0_1_5"/>
<dbReference type="Proteomes" id="UP000001943">
    <property type="component" value="Chromosome"/>
</dbReference>
<dbReference type="GO" id="GO:0005737">
    <property type="term" value="C:cytoplasm"/>
    <property type="evidence" value="ECO:0007669"/>
    <property type="project" value="UniProtKB-SubCell"/>
</dbReference>
<dbReference type="GO" id="GO:0004814">
    <property type="term" value="F:arginine-tRNA ligase activity"/>
    <property type="evidence" value="ECO:0007669"/>
    <property type="project" value="UniProtKB-UniRule"/>
</dbReference>
<dbReference type="GO" id="GO:0005524">
    <property type="term" value="F:ATP binding"/>
    <property type="evidence" value="ECO:0007669"/>
    <property type="project" value="UniProtKB-UniRule"/>
</dbReference>
<dbReference type="GO" id="GO:0006420">
    <property type="term" value="P:arginyl-tRNA aminoacylation"/>
    <property type="evidence" value="ECO:0007669"/>
    <property type="project" value="UniProtKB-UniRule"/>
</dbReference>
<dbReference type="CDD" id="cd00671">
    <property type="entry name" value="ArgRS_core"/>
    <property type="match status" value="1"/>
</dbReference>
<dbReference type="Gene3D" id="3.30.1360.70">
    <property type="entry name" value="Arginyl tRNA synthetase N-terminal domain"/>
    <property type="match status" value="1"/>
</dbReference>
<dbReference type="Gene3D" id="3.40.50.620">
    <property type="entry name" value="HUPs"/>
    <property type="match status" value="1"/>
</dbReference>
<dbReference type="Gene3D" id="1.10.730.10">
    <property type="entry name" value="Isoleucyl-tRNA Synthetase, Domain 1"/>
    <property type="match status" value="1"/>
</dbReference>
<dbReference type="HAMAP" id="MF_00123">
    <property type="entry name" value="Arg_tRNA_synth"/>
    <property type="match status" value="1"/>
</dbReference>
<dbReference type="InterPro" id="IPR001412">
    <property type="entry name" value="aa-tRNA-synth_I_CS"/>
</dbReference>
<dbReference type="InterPro" id="IPR001278">
    <property type="entry name" value="Arg-tRNA-ligase"/>
</dbReference>
<dbReference type="InterPro" id="IPR005148">
    <property type="entry name" value="Arg-tRNA-synth_N"/>
</dbReference>
<dbReference type="InterPro" id="IPR036695">
    <property type="entry name" value="Arg-tRNA-synth_N_sf"/>
</dbReference>
<dbReference type="InterPro" id="IPR035684">
    <property type="entry name" value="ArgRS_core"/>
</dbReference>
<dbReference type="InterPro" id="IPR008909">
    <property type="entry name" value="DALR_anticod-bd"/>
</dbReference>
<dbReference type="InterPro" id="IPR014729">
    <property type="entry name" value="Rossmann-like_a/b/a_fold"/>
</dbReference>
<dbReference type="InterPro" id="IPR009080">
    <property type="entry name" value="tRNAsynth_Ia_anticodon-bd"/>
</dbReference>
<dbReference type="NCBIfam" id="TIGR00456">
    <property type="entry name" value="argS"/>
    <property type="match status" value="1"/>
</dbReference>
<dbReference type="PANTHER" id="PTHR11956:SF5">
    <property type="entry name" value="ARGININE--TRNA LIGASE, CYTOPLASMIC"/>
    <property type="match status" value="1"/>
</dbReference>
<dbReference type="PANTHER" id="PTHR11956">
    <property type="entry name" value="ARGINYL-TRNA SYNTHETASE"/>
    <property type="match status" value="1"/>
</dbReference>
<dbReference type="Pfam" id="PF03485">
    <property type="entry name" value="Arg_tRNA_synt_N"/>
    <property type="match status" value="1"/>
</dbReference>
<dbReference type="Pfam" id="PF05746">
    <property type="entry name" value="DALR_1"/>
    <property type="match status" value="1"/>
</dbReference>
<dbReference type="Pfam" id="PF00750">
    <property type="entry name" value="tRNA-synt_1d"/>
    <property type="match status" value="1"/>
</dbReference>
<dbReference type="PRINTS" id="PR01038">
    <property type="entry name" value="TRNASYNTHARG"/>
</dbReference>
<dbReference type="SMART" id="SM01016">
    <property type="entry name" value="Arg_tRNA_synt_N"/>
    <property type="match status" value="1"/>
</dbReference>
<dbReference type="SMART" id="SM00836">
    <property type="entry name" value="DALR_1"/>
    <property type="match status" value="1"/>
</dbReference>
<dbReference type="SUPFAM" id="SSF47323">
    <property type="entry name" value="Anticodon-binding domain of a subclass of class I aminoacyl-tRNA synthetases"/>
    <property type="match status" value="1"/>
</dbReference>
<dbReference type="SUPFAM" id="SSF55190">
    <property type="entry name" value="Arginyl-tRNA synthetase (ArgRS), N-terminal 'additional' domain"/>
    <property type="match status" value="1"/>
</dbReference>
<dbReference type="SUPFAM" id="SSF52374">
    <property type="entry name" value="Nucleotidylyl transferase"/>
    <property type="match status" value="1"/>
</dbReference>
<dbReference type="PROSITE" id="PS00178">
    <property type="entry name" value="AA_TRNA_LIGASE_I"/>
    <property type="match status" value="1"/>
</dbReference>
<reference key="1">
    <citation type="journal article" date="2006" name="PLoS Genet.">
        <title>Comparative genomics of emerging human ehrlichiosis agents.</title>
        <authorList>
            <person name="Dunning Hotopp J.C."/>
            <person name="Lin M."/>
            <person name="Madupu R."/>
            <person name="Crabtree J."/>
            <person name="Angiuoli S.V."/>
            <person name="Eisen J.A."/>
            <person name="Seshadri R."/>
            <person name="Ren Q."/>
            <person name="Wu M."/>
            <person name="Utterback T.R."/>
            <person name="Smith S."/>
            <person name="Lewis M."/>
            <person name="Khouri H."/>
            <person name="Zhang C."/>
            <person name="Niu H."/>
            <person name="Lin Q."/>
            <person name="Ohashi N."/>
            <person name="Zhi N."/>
            <person name="Nelson W.C."/>
            <person name="Brinkac L.M."/>
            <person name="Dodson R.J."/>
            <person name="Rosovitz M.J."/>
            <person name="Sundaram J.P."/>
            <person name="Daugherty S.C."/>
            <person name="Davidsen T."/>
            <person name="Durkin A.S."/>
            <person name="Gwinn M.L."/>
            <person name="Haft D.H."/>
            <person name="Selengut J.D."/>
            <person name="Sullivan S.A."/>
            <person name="Zafar N."/>
            <person name="Zhou L."/>
            <person name="Benahmed F."/>
            <person name="Forberger H."/>
            <person name="Halpin R."/>
            <person name="Mulligan S."/>
            <person name="Robinson J."/>
            <person name="White O."/>
            <person name="Rikihisa Y."/>
            <person name="Tettelin H."/>
        </authorList>
    </citation>
    <scope>NUCLEOTIDE SEQUENCE [LARGE SCALE GENOMIC DNA]</scope>
    <source>
        <strain>HZ</strain>
    </source>
</reference>
<organism>
    <name type="scientific">Anaplasma phagocytophilum (strain HZ)</name>
    <dbReference type="NCBI Taxonomy" id="212042"/>
    <lineage>
        <taxon>Bacteria</taxon>
        <taxon>Pseudomonadati</taxon>
        <taxon>Pseudomonadota</taxon>
        <taxon>Alphaproteobacteria</taxon>
        <taxon>Rickettsiales</taxon>
        <taxon>Anaplasmataceae</taxon>
        <taxon>Anaplasma</taxon>
        <taxon>phagocytophilum group</taxon>
    </lineage>
</organism>
<accession>Q2GK20</accession>
<sequence>MLLDDKILDIFGFFRNAIEERIRAVWSGDNIPESLFKRIIVGPPAQPKHGDLYTNAALILGKFDKKNPMELASTLCNAFENIEGIESINVVAPGFINFHCVNSVWHGVVRNINKLGREYGRTDLGHNKKVNIEFVSANPTGPLHIGHARGAVFGDVLSNLLKWVGYDVIKEYYVNDAGSQVKTLVSSVFLRYKEALGEEITIGAGLYPGEYLKPIARDLVEKYGSDLLNASDKDEIIRSFTLSSMLNLIKEDLALLGVEHDVFVSESDLQNRNVIEECVKYLRERGIIYEGVLEKPKREDELSEWQPRVQMLFKSTEFGDDSDRALQKEDGTWSYFAGDIGYHFHKISRGFDSMIMTLGFDHKGYVSRLKAAVAALSNGKASIDIKLYNLVNFLENGTPVKMSKRKGEFLTVRDVIDEVGRDVARFMMLTRRNDVVLDFDFAKAREESKDSQIFYIQYAHARIRSIVRRCPELLAIEKIDFSCVITEQELSLLRLLSRWPSVIKTSAENYEPHTIAFYLIEVAEAFHALWGCGNSDPSMRFIVEGDLHTTSARIYIAIAVSHVIASGLDIFSITPSEEMR</sequence>
<evidence type="ECO:0000255" key="1">
    <source>
        <dbReference type="HAMAP-Rule" id="MF_00123"/>
    </source>
</evidence>
<gene>
    <name evidence="1" type="primary">argS</name>
    <name type="ordered locus">APH_0700</name>
</gene>
<name>SYR_ANAPZ</name>
<comment type="catalytic activity">
    <reaction evidence="1">
        <text>tRNA(Arg) + L-arginine + ATP = L-arginyl-tRNA(Arg) + AMP + diphosphate</text>
        <dbReference type="Rhea" id="RHEA:20301"/>
        <dbReference type="Rhea" id="RHEA-COMP:9658"/>
        <dbReference type="Rhea" id="RHEA-COMP:9673"/>
        <dbReference type="ChEBI" id="CHEBI:30616"/>
        <dbReference type="ChEBI" id="CHEBI:32682"/>
        <dbReference type="ChEBI" id="CHEBI:33019"/>
        <dbReference type="ChEBI" id="CHEBI:78442"/>
        <dbReference type="ChEBI" id="CHEBI:78513"/>
        <dbReference type="ChEBI" id="CHEBI:456215"/>
        <dbReference type="EC" id="6.1.1.19"/>
    </reaction>
</comment>
<comment type="subunit">
    <text evidence="1">Monomer.</text>
</comment>
<comment type="subcellular location">
    <subcellularLocation>
        <location evidence="1">Cytoplasm</location>
    </subcellularLocation>
</comment>
<comment type="similarity">
    <text evidence="1">Belongs to the class-I aminoacyl-tRNA synthetase family.</text>
</comment>
<keyword id="KW-0030">Aminoacyl-tRNA synthetase</keyword>
<keyword id="KW-0067">ATP-binding</keyword>
<keyword id="KW-0963">Cytoplasm</keyword>
<keyword id="KW-0436">Ligase</keyword>
<keyword id="KW-0547">Nucleotide-binding</keyword>
<keyword id="KW-0648">Protein biosynthesis</keyword>